<sequence>MNIVYWFTFEDRVKNKTPPYYYIGSKLNCSFENGIIYDSSGKEYWSSCKQKRFLNALMLQKPSVKIIQIDDDLDVIEAERKYQLEVNARDNPDYFNLVYAGGGFGVSGETHPAKDPEVREHMRLANYMNRDDFRPWKTSRANIESWKLSHIAYENYVLLLSSNLYGKTPGWRRVKGNINITDTTAKSMVKYFNSGWIPLEDPEYCELCQL</sequence>
<name>Y14F_BPT4</name>
<feature type="chain" id="PRO_0000165199" description="Uncharacterized 24.6 kDa protein in Gp32-Gp59 intergenic region">
    <location>
        <begin position="1"/>
        <end position="210"/>
    </location>
</feature>
<proteinExistence type="predicted"/>
<reference key="1">
    <citation type="journal article" date="2003" name="Microbiol. Mol. Biol. Rev.">
        <title>Bacteriophage T4 genome.</title>
        <authorList>
            <person name="Miller E.S."/>
            <person name="Kutter E."/>
            <person name="Mosig G."/>
            <person name="Arisaka F."/>
            <person name="Kunisawa T."/>
            <person name="Ruger W."/>
        </authorList>
    </citation>
    <scope>NUCLEOTIDE SEQUENCE [LARGE SCALE GENOMIC DNA]</scope>
</reference>
<reference key="2">
    <citation type="journal article" date="1989" name="Nucleic Acids Res.">
        <title>Organization of the bacteriophage T4 genome between map positions 150.745 and 145.824.</title>
        <authorList>
            <person name="Hahn S."/>
            <person name="Rueger W."/>
        </authorList>
    </citation>
    <scope>NUCLEOTIDE SEQUENCE [GENOMIC DNA] OF 1-186</scope>
    <source>
        <strain>BK536</strain>
    </source>
</reference>
<reference key="3">
    <citation type="journal article" date="1982" name="Proc. Natl. Acad. Sci. U.S.A.">
        <title>Nucleotide sequences involved in bacteriophage T4 gene 32 translational self-regulation.</title>
        <authorList>
            <person name="Krisch H.M."/>
            <person name="Allet B."/>
        </authorList>
    </citation>
    <scope>NUCLEOTIDE SEQUENCE [GENOMIC DNA] OF 116-210</scope>
</reference>
<accession>P13321</accession>
<dbReference type="EMBL" id="AF158101">
    <property type="protein sequence ID" value="AAD42455.1"/>
    <property type="molecule type" value="Genomic_DNA"/>
</dbReference>
<dbReference type="EMBL" id="X15818">
    <property type="protein sequence ID" value="CAA33816.1"/>
    <property type="molecule type" value="Genomic_DNA"/>
</dbReference>
<dbReference type="EMBL" id="J02513">
    <property type="status" value="NOT_ANNOTATED_CDS"/>
    <property type="molecule type" value="Genomic_DNA"/>
</dbReference>
<dbReference type="PIR" id="S05560">
    <property type="entry name" value="S05560"/>
</dbReference>
<dbReference type="RefSeq" id="NP_049855.1">
    <property type="nucleotide sequence ID" value="NC_000866.4"/>
</dbReference>
<dbReference type="GeneID" id="1258646"/>
<dbReference type="KEGG" id="vg:1258646"/>
<dbReference type="OrthoDB" id="14085at10239"/>
<dbReference type="Proteomes" id="UP000009087">
    <property type="component" value="Segment"/>
</dbReference>
<dbReference type="CDD" id="cd10444">
    <property type="entry name" value="GIY-YIG_SegABCDEFG"/>
    <property type="match status" value="1"/>
</dbReference>
<organismHost>
    <name type="scientific">Escherichia coli</name>
    <dbReference type="NCBI Taxonomy" id="562"/>
</organismHost>
<keyword id="KW-1185">Reference proteome</keyword>
<protein>
    <recommendedName>
        <fullName>Uncharacterized 24.6 kDa protein in Gp32-Gp59 intergenic region</fullName>
    </recommendedName>
</protein>
<gene>
    <name type="primary">y14F</name>
    <name type="synonym">32.1</name>
</gene>
<organism>
    <name type="scientific">Enterobacteria phage T4</name>
    <name type="common">Bacteriophage T4</name>
    <dbReference type="NCBI Taxonomy" id="10665"/>
    <lineage>
        <taxon>Viruses</taxon>
        <taxon>Duplodnaviria</taxon>
        <taxon>Heunggongvirae</taxon>
        <taxon>Uroviricota</taxon>
        <taxon>Caudoviricetes</taxon>
        <taxon>Straboviridae</taxon>
        <taxon>Tevenvirinae</taxon>
        <taxon>Tequatrovirus</taxon>
    </lineage>
</organism>